<keyword id="KW-1003">Cell membrane</keyword>
<keyword id="KW-0444">Lipid biosynthesis</keyword>
<keyword id="KW-0443">Lipid metabolism</keyword>
<keyword id="KW-0472">Membrane</keyword>
<keyword id="KW-0594">Phospholipid biosynthesis</keyword>
<keyword id="KW-1208">Phospholipid metabolism</keyword>
<keyword id="KW-1185">Reference proteome</keyword>
<keyword id="KW-0808">Transferase</keyword>
<keyword id="KW-0812">Transmembrane</keyword>
<keyword id="KW-1133">Transmembrane helix</keyword>
<organism>
    <name type="scientific">Haemophilus influenzae (strain ATCC 51907 / DSM 11121 / KW20 / Rd)</name>
    <dbReference type="NCBI Taxonomy" id="71421"/>
    <lineage>
        <taxon>Bacteria</taxon>
        <taxon>Pseudomonadati</taxon>
        <taxon>Pseudomonadota</taxon>
        <taxon>Gammaproteobacteria</taxon>
        <taxon>Pasteurellales</taxon>
        <taxon>Pasteurellaceae</taxon>
        <taxon>Haemophilus</taxon>
    </lineage>
</organism>
<comment type="function">
    <text evidence="1">This protein catalyzes the committed step to the synthesis of the acidic phospholipids.</text>
</comment>
<comment type="catalytic activity">
    <reaction>
        <text>a CDP-1,2-diacyl-sn-glycerol + sn-glycerol 3-phosphate = a 1,2-diacyl-sn-glycero-3-phospho-(1'-sn-glycero-3'-phosphate) + CMP + H(+)</text>
        <dbReference type="Rhea" id="RHEA:12593"/>
        <dbReference type="ChEBI" id="CHEBI:15378"/>
        <dbReference type="ChEBI" id="CHEBI:57597"/>
        <dbReference type="ChEBI" id="CHEBI:58332"/>
        <dbReference type="ChEBI" id="CHEBI:60110"/>
        <dbReference type="ChEBI" id="CHEBI:60377"/>
        <dbReference type="EC" id="2.7.8.5"/>
    </reaction>
</comment>
<comment type="pathway">
    <text>Phospholipid metabolism; phosphatidylglycerol biosynthesis; phosphatidylglycerol from CDP-diacylglycerol: step 1/2.</text>
</comment>
<comment type="subcellular location">
    <subcellularLocation>
        <location evidence="1">Cell membrane</location>
        <topology evidence="1">Multi-pass membrane protein</topology>
    </subcellularLocation>
</comment>
<comment type="similarity">
    <text evidence="3">Belongs to the CDP-alcohol phosphatidyltransferase class-I family.</text>
</comment>
<sequence length="185" mass="21331">MKFNIPIFLTIFRVILIPFFVIAFYLPIESSPFITTLIFFIAGVTDWLDGYLARKWKQTTRFGAFLDPVADKVMVVAALVLIVEHQHTFWITIPAIIMISREIIISALREWMAELGERSKIAVSWWGKWKTTAQMLALGGLLWRYNNYMEIAAIILLYIAAILTIWSMIQYLQVAKGSLLDNIQL</sequence>
<dbReference type="EC" id="2.7.8.5"/>
<dbReference type="EMBL" id="L42023">
    <property type="protein sequence ID" value="AAC21797.1"/>
    <property type="molecule type" value="Genomic_DNA"/>
</dbReference>
<dbReference type="PIR" id="F64049">
    <property type="entry name" value="F64049"/>
</dbReference>
<dbReference type="RefSeq" id="NP_438295.1">
    <property type="nucleotide sequence ID" value="NC_000907.1"/>
</dbReference>
<dbReference type="SMR" id="P44528"/>
<dbReference type="STRING" id="71421.HI_0123"/>
<dbReference type="EnsemblBacteria" id="AAC21797">
    <property type="protein sequence ID" value="AAC21797"/>
    <property type="gene ID" value="HI_0123"/>
</dbReference>
<dbReference type="KEGG" id="hin:HI_0123"/>
<dbReference type="PATRIC" id="fig|71421.8.peg.127"/>
<dbReference type="eggNOG" id="COG0558">
    <property type="taxonomic scope" value="Bacteria"/>
</dbReference>
<dbReference type="HOGENOM" id="CLU_051314_2_1_6"/>
<dbReference type="OrthoDB" id="9796672at2"/>
<dbReference type="PhylomeDB" id="P44528"/>
<dbReference type="BioCyc" id="HINF71421:G1GJ1-133-MONOMER"/>
<dbReference type="UniPathway" id="UPA00084">
    <property type="reaction ID" value="UER00503"/>
</dbReference>
<dbReference type="Proteomes" id="UP000000579">
    <property type="component" value="Chromosome"/>
</dbReference>
<dbReference type="GO" id="GO:0005886">
    <property type="term" value="C:plasma membrane"/>
    <property type="evidence" value="ECO:0000318"/>
    <property type="project" value="GO_Central"/>
</dbReference>
<dbReference type="GO" id="GO:0008444">
    <property type="term" value="F:CDP-diacylglycerol-glycerol-3-phosphate 3-phosphatidyltransferase activity"/>
    <property type="evidence" value="ECO:0007669"/>
    <property type="project" value="UniProtKB-EC"/>
</dbReference>
<dbReference type="GO" id="GO:0046474">
    <property type="term" value="P:glycerophospholipid biosynthetic process"/>
    <property type="evidence" value="ECO:0000318"/>
    <property type="project" value="GO_Central"/>
</dbReference>
<dbReference type="GO" id="GO:0006655">
    <property type="term" value="P:phosphatidylglycerol biosynthetic process"/>
    <property type="evidence" value="ECO:0007669"/>
    <property type="project" value="UniProtKB-UniPathway"/>
</dbReference>
<dbReference type="FunFam" id="1.20.120.1760:FF:000001">
    <property type="entry name" value="CDP-diacylglycerol--glycerol-3-phosphate 3-phosphatidyltransferase"/>
    <property type="match status" value="1"/>
</dbReference>
<dbReference type="Gene3D" id="1.20.120.1760">
    <property type="match status" value="1"/>
</dbReference>
<dbReference type="InterPro" id="IPR050324">
    <property type="entry name" value="CDP-alcohol_PTase-I"/>
</dbReference>
<dbReference type="InterPro" id="IPR000462">
    <property type="entry name" value="CDP-OH_P_trans"/>
</dbReference>
<dbReference type="InterPro" id="IPR043130">
    <property type="entry name" value="CDP-OH_PTrfase_TM_dom"/>
</dbReference>
<dbReference type="InterPro" id="IPR048254">
    <property type="entry name" value="CDP_ALCOHOL_P_TRANSF_CS"/>
</dbReference>
<dbReference type="InterPro" id="IPR004570">
    <property type="entry name" value="Phosphatidylglycerol_P_synth"/>
</dbReference>
<dbReference type="NCBIfam" id="TIGR00560">
    <property type="entry name" value="pgsA"/>
    <property type="match status" value="1"/>
</dbReference>
<dbReference type="PANTHER" id="PTHR14269:SF62">
    <property type="entry name" value="CDP-DIACYLGLYCEROL--GLYCEROL-3-PHOSPHATE 3-PHOSPHATIDYLTRANSFERASE 1, CHLOROPLASTIC"/>
    <property type="match status" value="1"/>
</dbReference>
<dbReference type="PANTHER" id="PTHR14269">
    <property type="entry name" value="CDP-DIACYLGLYCEROL--GLYCEROL-3-PHOSPHATE 3-PHOSPHATIDYLTRANSFERASE-RELATED"/>
    <property type="match status" value="1"/>
</dbReference>
<dbReference type="Pfam" id="PF01066">
    <property type="entry name" value="CDP-OH_P_transf"/>
    <property type="match status" value="1"/>
</dbReference>
<dbReference type="PIRSF" id="PIRSF000847">
    <property type="entry name" value="Phos_ph_gly_syn"/>
    <property type="match status" value="1"/>
</dbReference>
<dbReference type="PROSITE" id="PS00379">
    <property type="entry name" value="CDP_ALCOHOL_P_TRANSF"/>
    <property type="match status" value="1"/>
</dbReference>
<evidence type="ECO:0000250" key="1"/>
<evidence type="ECO:0000255" key="2"/>
<evidence type="ECO:0000305" key="3"/>
<proteinExistence type="inferred from homology"/>
<gene>
    <name type="primary">pgsA</name>
    <name type="ordered locus">HI_0123</name>
</gene>
<protein>
    <recommendedName>
        <fullName>CDP-diacylglycerol--glycerol-3-phosphate 3-phosphatidyltransferase</fullName>
        <ecNumber>2.7.8.5</ecNumber>
    </recommendedName>
    <alternativeName>
        <fullName>Phosphatidylglycerophosphate synthase</fullName>
        <shortName>PGP synthase</shortName>
    </alternativeName>
</protein>
<feature type="chain" id="PRO_0000056776" description="CDP-diacylglycerol--glycerol-3-phosphate 3-phosphatidyltransferase">
    <location>
        <begin position="1"/>
        <end position="185"/>
    </location>
</feature>
<feature type="transmembrane region" description="Helical" evidence="2">
    <location>
        <begin position="7"/>
        <end position="26"/>
    </location>
</feature>
<feature type="transmembrane region" description="Helical" evidence="2">
    <location>
        <begin position="33"/>
        <end position="52"/>
    </location>
</feature>
<feature type="transmembrane region" description="Helical" evidence="2">
    <location>
        <begin position="89"/>
        <end position="108"/>
    </location>
</feature>
<feature type="transmembrane region" description="Helical" evidence="2">
    <location>
        <begin position="151"/>
        <end position="172"/>
    </location>
</feature>
<reference key="1">
    <citation type="journal article" date="1995" name="Science">
        <title>Whole-genome random sequencing and assembly of Haemophilus influenzae Rd.</title>
        <authorList>
            <person name="Fleischmann R.D."/>
            <person name="Adams M.D."/>
            <person name="White O."/>
            <person name="Clayton R.A."/>
            <person name="Kirkness E.F."/>
            <person name="Kerlavage A.R."/>
            <person name="Bult C.J."/>
            <person name="Tomb J.-F."/>
            <person name="Dougherty B.A."/>
            <person name="Merrick J.M."/>
            <person name="McKenney K."/>
            <person name="Sutton G.G."/>
            <person name="FitzHugh W."/>
            <person name="Fields C.A."/>
            <person name="Gocayne J.D."/>
            <person name="Scott J.D."/>
            <person name="Shirley R."/>
            <person name="Liu L.-I."/>
            <person name="Glodek A."/>
            <person name="Kelley J.M."/>
            <person name="Weidman J.F."/>
            <person name="Phillips C.A."/>
            <person name="Spriggs T."/>
            <person name="Hedblom E."/>
            <person name="Cotton M.D."/>
            <person name="Utterback T.R."/>
            <person name="Hanna M.C."/>
            <person name="Nguyen D.T."/>
            <person name="Saudek D.M."/>
            <person name="Brandon R.C."/>
            <person name="Fine L.D."/>
            <person name="Fritchman J.L."/>
            <person name="Fuhrmann J.L."/>
            <person name="Geoghagen N.S.M."/>
            <person name="Gnehm C.L."/>
            <person name="McDonald L.A."/>
            <person name="Small K.V."/>
            <person name="Fraser C.M."/>
            <person name="Smith H.O."/>
            <person name="Venter J.C."/>
        </authorList>
    </citation>
    <scope>NUCLEOTIDE SEQUENCE [LARGE SCALE GENOMIC DNA]</scope>
    <source>
        <strain>ATCC 51907 / DSM 11121 / KW20 / Rd</strain>
    </source>
</reference>
<accession>P44528</accession>
<name>PGSA_HAEIN</name>